<comment type="function">
    <text evidence="1">Located at the top of the head of the 30S subunit, it contacts several helices of the 16S rRNA. In the 70S ribosome it contacts the 23S rRNA (bridge B1a) and protein L5 of the 50S subunit (bridge B1b), connecting the 2 subunits; these bridges are implicated in subunit movement. Contacts the tRNAs in the A and P-sites.</text>
</comment>
<comment type="subunit">
    <text evidence="1">Part of the 30S ribosomal subunit. Forms a loose heterodimer with protein S19. Forms two bridges to the 50S subunit in the 70S ribosome.</text>
</comment>
<comment type="similarity">
    <text evidence="1">Belongs to the universal ribosomal protein uS13 family.</text>
</comment>
<evidence type="ECO:0000255" key="1">
    <source>
        <dbReference type="HAMAP-Rule" id="MF_01315"/>
    </source>
</evidence>
<evidence type="ECO:0000256" key="2">
    <source>
        <dbReference type="SAM" id="MobiDB-lite"/>
    </source>
</evidence>
<evidence type="ECO:0000305" key="3"/>
<gene>
    <name evidence="1" type="primary">rpsM</name>
    <name type="ordered locus">Nther_0220</name>
</gene>
<keyword id="KW-1185">Reference proteome</keyword>
<keyword id="KW-0687">Ribonucleoprotein</keyword>
<keyword id="KW-0689">Ribosomal protein</keyword>
<keyword id="KW-0694">RNA-binding</keyword>
<keyword id="KW-0699">rRNA-binding</keyword>
<keyword id="KW-0820">tRNA-binding</keyword>
<dbReference type="EMBL" id="CP001034">
    <property type="protein sequence ID" value="ACB83819.1"/>
    <property type="molecule type" value="Genomic_DNA"/>
</dbReference>
<dbReference type="RefSeq" id="WP_012446708.1">
    <property type="nucleotide sequence ID" value="NC_010718.1"/>
</dbReference>
<dbReference type="SMR" id="B2A4P7"/>
<dbReference type="FunCoup" id="B2A4P7">
    <property type="interactions" value="440"/>
</dbReference>
<dbReference type="STRING" id="457570.Nther_0220"/>
<dbReference type="KEGG" id="nth:Nther_0220"/>
<dbReference type="eggNOG" id="COG0099">
    <property type="taxonomic scope" value="Bacteria"/>
</dbReference>
<dbReference type="HOGENOM" id="CLU_103849_1_2_9"/>
<dbReference type="InParanoid" id="B2A4P7"/>
<dbReference type="OrthoDB" id="9803610at2"/>
<dbReference type="Proteomes" id="UP000001683">
    <property type="component" value="Chromosome"/>
</dbReference>
<dbReference type="GO" id="GO:0005829">
    <property type="term" value="C:cytosol"/>
    <property type="evidence" value="ECO:0007669"/>
    <property type="project" value="TreeGrafter"/>
</dbReference>
<dbReference type="GO" id="GO:0015935">
    <property type="term" value="C:small ribosomal subunit"/>
    <property type="evidence" value="ECO:0007669"/>
    <property type="project" value="TreeGrafter"/>
</dbReference>
<dbReference type="GO" id="GO:0019843">
    <property type="term" value="F:rRNA binding"/>
    <property type="evidence" value="ECO:0007669"/>
    <property type="project" value="UniProtKB-UniRule"/>
</dbReference>
<dbReference type="GO" id="GO:0003735">
    <property type="term" value="F:structural constituent of ribosome"/>
    <property type="evidence" value="ECO:0007669"/>
    <property type="project" value="InterPro"/>
</dbReference>
<dbReference type="GO" id="GO:0000049">
    <property type="term" value="F:tRNA binding"/>
    <property type="evidence" value="ECO:0007669"/>
    <property type="project" value="UniProtKB-UniRule"/>
</dbReference>
<dbReference type="GO" id="GO:0006412">
    <property type="term" value="P:translation"/>
    <property type="evidence" value="ECO:0007669"/>
    <property type="project" value="UniProtKB-UniRule"/>
</dbReference>
<dbReference type="FunFam" id="1.10.8.50:FF:000001">
    <property type="entry name" value="30S ribosomal protein S13"/>
    <property type="match status" value="1"/>
</dbReference>
<dbReference type="FunFam" id="4.10.910.10:FF:000001">
    <property type="entry name" value="30S ribosomal protein S13"/>
    <property type="match status" value="1"/>
</dbReference>
<dbReference type="Gene3D" id="1.10.8.50">
    <property type="match status" value="1"/>
</dbReference>
<dbReference type="Gene3D" id="4.10.910.10">
    <property type="entry name" value="30s ribosomal protein s13, domain 2"/>
    <property type="match status" value="1"/>
</dbReference>
<dbReference type="HAMAP" id="MF_01315">
    <property type="entry name" value="Ribosomal_uS13"/>
    <property type="match status" value="1"/>
</dbReference>
<dbReference type="InterPro" id="IPR027437">
    <property type="entry name" value="Rbsml_uS13_C"/>
</dbReference>
<dbReference type="InterPro" id="IPR001892">
    <property type="entry name" value="Ribosomal_uS13"/>
</dbReference>
<dbReference type="InterPro" id="IPR010979">
    <property type="entry name" value="Ribosomal_uS13-like_H2TH"/>
</dbReference>
<dbReference type="InterPro" id="IPR019980">
    <property type="entry name" value="Ribosomal_uS13_bac-type"/>
</dbReference>
<dbReference type="InterPro" id="IPR018269">
    <property type="entry name" value="Ribosomal_uS13_CS"/>
</dbReference>
<dbReference type="NCBIfam" id="TIGR03631">
    <property type="entry name" value="uS13_bact"/>
    <property type="match status" value="1"/>
</dbReference>
<dbReference type="PANTHER" id="PTHR10871">
    <property type="entry name" value="30S RIBOSOMAL PROTEIN S13/40S RIBOSOMAL PROTEIN S18"/>
    <property type="match status" value="1"/>
</dbReference>
<dbReference type="PANTHER" id="PTHR10871:SF1">
    <property type="entry name" value="SMALL RIBOSOMAL SUBUNIT PROTEIN US13M"/>
    <property type="match status" value="1"/>
</dbReference>
<dbReference type="Pfam" id="PF00416">
    <property type="entry name" value="Ribosomal_S13"/>
    <property type="match status" value="1"/>
</dbReference>
<dbReference type="PIRSF" id="PIRSF002134">
    <property type="entry name" value="Ribosomal_S13"/>
    <property type="match status" value="1"/>
</dbReference>
<dbReference type="SUPFAM" id="SSF46946">
    <property type="entry name" value="S13-like H2TH domain"/>
    <property type="match status" value="1"/>
</dbReference>
<dbReference type="PROSITE" id="PS00646">
    <property type="entry name" value="RIBOSOMAL_S13_1"/>
    <property type="match status" value="1"/>
</dbReference>
<dbReference type="PROSITE" id="PS50159">
    <property type="entry name" value="RIBOSOMAL_S13_2"/>
    <property type="match status" value="1"/>
</dbReference>
<feature type="chain" id="PRO_1000141293" description="Small ribosomal subunit protein uS13">
    <location>
        <begin position="1"/>
        <end position="121"/>
    </location>
</feature>
<feature type="region of interest" description="Disordered" evidence="2">
    <location>
        <begin position="94"/>
        <end position="121"/>
    </location>
</feature>
<feature type="compositionally biased region" description="Basic residues" evidence="2">
    <location>
        <begin position="107"/>
        <end position="121"/>
    </location>
</feature>
<proteinExistence type="inferred from homology"/>
<reference key="1">
    <citation type="submission" date="2008-04" db="EMBL/GenBank/DDBJ databases">
        <title>Complete sequence of chromosome of Natranaerobius thermophilus JW/NM-WN-LF.</title>
        <authorList>
            <consortium name="US DOE Joint Genome Institute"/>
            <person name="Copeland A."/>
            <person name="Lucas S."/>
            <person name="Lapidus A."/>
            <person name="Glavina del Rio T."/>
            <person name="Dalin E."/>
            <person name="Tice H."/>
            <person name="Bruce D."/>
            <person name="Goodwin L."/>
            <person name="Pitluck S."/>
            <person name="Chertkov O."/>
            <person name="Brettin T."/>
            <person name="Detter J.C."/>
            <person name="Han C."/>
            <person name="Kuske C.R."/>
            <person name="Schmutz J."/>
            <person name="Larimer F."/>
            <person name="Land M."/>
            <person name="Hauser L."/>
            <person name="Kyrpides N."/>
            <person name="Lykidis A."/>
            <person name="Mesbah N.M."/>
            <person name="Wiegel J."/>
        </authorList>
    </citation>
    <scope>NUCLEOTIDE SEQUENCE [LARGE SCALE GENOMIC DNA]</scope>
    <source>
        <strain>ATCC BAA-1301 / DSM 18059 / JW/NM-WN-LF</strain>
    </source>
</reference>
<protein>
    <recommendedName>
        <fullName evidence="1">Small ribosomal subunit protein uS13</fullName>
    </recommendedName>
    <alternativeName>
        <fullName evidence="3">30S ribosomal protein S13</fullName>
    </alternativeName>
</protein>
<accession>B2A4P7</accession>
<name>RS13_NATTJ</name>
<sequence length="121" mass="13723">MARIAGVDLPRNKRVAIGLTYIYGIGHSKAEEIVEQTGVSTDTRVKDLTEDEVNRLRSTIDNDYTVEGDLRREISMNIKRLMEIGCYRGLRHRRGLPVRGQSTKNNARTRKGPKRTVGAKR</sequence>
<organism>
    <name type="scientific">Natranaerobius thermophilus (strain ATCC BAA-1301 / DSM 18059 / JW/NM-WN-LF)</name>
    <dbReference type="NCBI Taxonomy" id="457570"/>
    <lineage>
        <taxon>Bacteria</taxon>
        <taxon>Bacillati</taxon>
        <taxon>Bacillota</taxon>
        <taxon>Clostridia</taxon>
        <taxon>Natranaerobiales</taxon>
        <taxon>Natranaerobiaceae</taxon>
        <taxon>Natranaerobius</taxon>
    </lineage>
</organism>